<sequence length="70" mass="7332">MPRLPPILRLLQAPAKFTVVPKAHVSAKPAKTPTSAVEQAVGISAIVVGFMVPAGWVLAHLESYKKSSAA</sequence>
<evidence type="ECO:0000250" key="1">
    <source>
        <dbReference type="UniProtKB" id="P10175"/>
    </source>
</evidence>
<evidence type="ECO:0000269" key="2">
    <source>
    </source>
</evidence>
<evidence type="ECO:0000269" key="3">
    <source>
    </source>
</evidence>
<evidence type="ECO:0000305" key="4"/>
<evidence type="ECO:0000312" key="5">
    <source>
        <dbReference type="PDB" id="7O3E"/>
    </source>
</evidence>
<evidence type="ECO:0007744" key="6">
    <source>
        <dbReference type="PDB" id="7O37"/>
    </source>
</evidence>
<evidence type="ECO:0007744" key="7">
    <source>
        <dbReference type="PDB" id="7O3C"/>
    </source>
</evidence>
<evidence type="ECO:0007744" key="8">
    <source>
        <dbReference type="PDB" id="8PW5"/>
    </source>
</evidence>
<evidence type="ECO:0007829" key="9">
    <source>
        <dbReference type="PDB" id="7O37"/>
    </source>
</evidence>
<reference key="1">
    <citation type="journal article" date="1995" name="Biochim. Biophys. Acta">
        <title>Sequence of the cDNA for the heart/muscle isoform of mouse cytochrome c oxidase subunit VIII.</title>
        <authorList>
            <person name="Hegeman A.D."/>
            <person name="Brown J.S."/>
            <person name="Lomax M.I."/>
        </authorList>
    </citation>
    <scope>NUCLEOTIDE SEQUENCE [MRNA]</scope>
    <source>
        <strain>BALB/cJ</strain>
        <tissue>Heart</tissue>
    </source>
</reference>
<reference key="2">
    <citation type="journal article" date="2004" name="Genome Res.">
        <title>The status, quality, and expansion of the NIH full-length cDNA project: the Mammalian Gene Collection (MGC).</title>
        <authorList>
            <consortium name="The MGC Project Team"/>
        </authorList>
    </citation>
    <scope>NUCLEOTIDE SEQUENCE [LARGE SCALE MRNA]</scope>
    <source>
        <tissue>Heart</tissue>
        <tissue>Mammary gland</tissue>
    </source>
</reference>
<reference evidence="5 6 7" key="3">
    <citation type="journal article" date="2021" name="Nature">
        <title>Structure and assembly of the mammalian mitochondrial supercomplex CIII2CIV.</title>
        <authorList>
            <person name="Vercellino I."/>
            <person name="Sazanov L.A."/>
        </authorList>
    </citation>
    <scope>STRUCTURE BY ELECTRON MICROSCOPY (3.20 ANGSTROMS) IN COMPLEX WITH MITOCHONDRIAL RESPIRATORY SUPERCOMPLEX</scope>
    <scope>FUNCTION</scope>
    <scope>PATHWAY</scope>
    <scope>SUBCELLULAR LOCATION</scope>
    <scope>SUBUNIT</scope>
</reference>
<reference evidence="8" key="4">
    <citation type="journal article" date="2024" name="Nat. Struct. Mol. Biol.">
        <title>SCAF1 drives the compositional diversity of mammalian respirasomes.</title>
        <authorList>
            <person name="Vercellino I."/>
            <person name="Sazanov L.A."/>
        </authorList>
    </citation>
    <scope>STRUCTURE BY ELECTRON MICROSCOPY (3.60 ANGSTROMS) IN COMPLEX WITH MITOCHONDRIAL RESPIRATORY SUPERCOMPLEX</scope>
    <scope>FUNCTION</scope>
    <scope>SUBCELLULAR LOCATION</scope>
    <scope>SUBUNIT</scope>
</reference>
<protein>
    <recommendedName>
        <fullName>Cytochrome c oxidase subunit 8B, mitochondrial</fullName>
    </recommendedName>
    <alternativeName>
        <fullName>Cytochrome c oxidase polypeptide VIII-heart</fullName>
    </alternativeName>
    <alternativeName>
        <fullName>Cytochrome c oxidase subunit 8-1</fullName>
    </alternativeName>
    <alternativeName>
        <fullName>Cytochrome c oxidase subunit 8H</fullName>
    </alternativeName>
</protein>
<dbReference type="EMBL" id="U15541">
    <property type="protein sequence ID" value="AAA80280.1"/>
    <property type="molecule type" value="mRNA"/>
</dbReference>
<dbReference type="EMBL" id="BC027531">
    <property type="protein sequence ID" value="AAH27531.1"/>
    <property type="molecule type" value="mRNA"/>
</dbReference>
<dbReference type="EMBL" id="BC086930">
    <property type="protein sequence ID" value="AAH86930.1"/>
    <property type="molecule type" value="mRNA"/>
</dbReference>
<dbReference type="CCDS" id="CCDS21991.1"/>
<dbReference type="PIR" id="S53706">
    <property type="entry name" value="S53706"/>
</dbReference>
<dbReference type="RefSeq" id="NP_031777.1">
    <property type="nucleotide sequence ID" value="NM_007751.3"/>
</dbReference>
<dbReference type="PDB" id="7O37">
    <property type="method" value="EM"/>
    <property type="resolution" value="3.20 A"/>
    <property type="chains" value="m=25-70"/>
</dbReference>
<dbReference type="PDB" id="7O3C">
    <property type="method" value="EM"/>
    <property type="resolution" value="3.30 A"/>
    <property type="chains" value="m=25-70"/>
</dbReference>
<dbReference type="PDB" id="7O3E">
    <property type="method" value="EM"/>
    <property type="resolution" value="3.60 A"/>
    <property type="chains" value="m=25-70"/>
</dbReference>
<dbReference type="PDB" id="8PW5">
    <property type="method" value="EM"/>
    <property type="resolution" value="3.60 A"/>
    <property type="chains" value="m/z=1-70"/>
</dbReference>
<dbReference type="PDB" id="8PW6">
    <property type="method" value="EM"/>
    <property type="resolution" value="3.30 A"/>
    <property type="chains" value="z=1-70"/>
</dbReference>
<dbReference type="PDB" id="8PW7">
    <property type="method" value="EM"/>
    <property type="resolution" value="3.50 A"/>
    <property type="chains" value="z=1-70"/>
</dbReference>
<dbReference type="PDBsum" id="7O37"/>
<dbReference type="PDBsum" id="7O3C"/>
<dbReference type="PDBsum" id="7O3E"/>
<dbReference type="PDBsum" id="8PW5"/>
<dbReference type="PDBsum" id="8PW6"/>
<dbReference type="PDBsum" id="8PW7"/>
<dbReference type="EMDB" id="EMD-12702"/>
<dbReference type="EMDB" id="EMD-12703"/>
<dbReference type="EMDB" id="EMD-12705"/>
<dbReference type="SMR" id="P48772"/>
<dbReference type="FunCoup" id="P48772">
    <property type="interactions" value="133"/>
</dbReference>
<dbReference type="STRING" id="10090.ENSMUSP00000026561"/>
<dbReference type="TCDB" id="3.D.4.11.1">
    <property type="family name" value="the proton-translocating cytochrome oxidase (cox) superfamily"/>
</dbReference>
<dbReference type="GlyGen" id="P48772">
    <property type="glycosylation" value="1 site, 1 O-linked glycan (1 site)"/>
</dbReference>
<dbReference type="PaxDb" id="10090-ENSMUSP00000026561"/>
<dbReference type="ProteomicsDB" id="283610"/>
<dbReference type="Antibodypedia" id="182">
    <property type="antibodies" value="18 antibodies from 12 providers"/>
</dbReference>
<dbReference type="DNASU" id="12869"/>
<dbReference type="Ensembl" id="ENSMUST00000026561.10">
    <property type="protein sequence ID" value="ENSMUSP00000026561.9"/>
    <property type="gene ID" value="ENSMUSG00000025488.10"/>
</dbReference>
<dbReference type="GeneID" id="12869"/>
<dbReference type="KEGG" id="mmu:12869"/>
<dbReference type="UCSC" id="uc009kio.2">
    <property type="organism name" value="mouse"/>
</dbReference>
<dbReference type="AGR" id="MGI:105958"/>
<dbReference type="CTD" id="12869"/>
<dbReference type="MGI" id="MGI:105958">
    <property type="gene designation" value="Cox8b"/>
</dbReference>
<dbReference type="VEuPathDB" id="HostDB:ENSMUSG00000025488"/>
<dbReference type="eggNOG" id="ENOG502SB3F">
    <property type="taxonomic scope" value="Eukaryota"/>
</dbReference>
<dbReference type="GeneTree" id="ENSGT00390000006255"/>
<dbReference type="HOGENOM" id="CLU_203368_0_0_1"/>
<dbReference type="InParanoid" id="P48772"/>
<dbReference type="OMA" id="WVVPKAH"/>
<dbReference type="OrthoDB" id="8931496at2759"/>
<dbReference type="PhylomeDB" id="P48772"/>
<dbReference type="TreeFam" id="TF105070"/>
<dbReference type="UniPathway" id="UPA00705"/>
<dbReference type="BioGRID-ORCS" id="12869">
    <property type="hits" value="1 hit in 77 CRISPR screens"/>
</dbReference>
<dbReference type="ChiTaRS" id="Cox8b">
    <property type="organism name" value="mouse"/>
</dbReference>
<dbReference type="PRO" id="PR:P48772"/>
<dbReference type="Proteomes" id="UP000000589">
    <property type="component" value="Chromosome 7"/>
</dbReference>
<dbReference type="RNAct" id="P48772">
    <property type="molecule type" value="protein"/>
</dbReference>
<dbReference type="Bgee" id="ENSMUSG00000025488">
    <property type="expression patterns" value="Expressed in digastric muscle group and 140 other cell types or tissues"/>
</dbReference>
<dbReference type="ExpressionAtlas" id="P48772">
    <property type="expression patterns" value="baseline and differential"/>
</dbReference>
<dbReference type="GO" id="GO:0005743">
    <property type="term" value="C:mitochondrial inner membrane"/>
    <property type="evidence" value="ECO:0000314"/>
    <property type="project" value="UniProtKB"/>
</dbReference>
<dbReference type="GO" id="GO:0005739">
    <property type="term" value="C:mitochondrion"/>
    <property type="evidence" value="ECO:0007005"/>
    <property type="project" value="MGI"/>
</dbReference>
<dbReference type="GO" id="GO:0045277">
    <property type="term" value="C:respiratory chain complex IV"/>
    <property type="evidence" value="ECO:0000314"/>
    <property type="project" value="UniProtKB"/>
</dbReference>
<dbReference type="GO" id="GO:0006123">
    <property type="term" value="P:mitochondrial electron transport, cytochrome c to oxygen"/>
    <property type="evidence" value="ECO:0007669"/>
    <property type="project" value="InterPro"/>
</dbReference>
<dbReference type="FunFam" id="4.10.81.10:FF:000001">
    <property type="entry name" value="Cytochrome c oxidase subunit 8B, mitochondrial"/>
    <property type="match status" value="1"/>
</dbReference>
<dbReference type="Gene3D" id="4.10.81.10">
    <property type="entry name" value="Cytochrome c oxidase, subunit 8"/>
    <property type="match status" value="1"/>
</dbReference>
<dbReference type="InterPro" id="IPR003205">
    <property type="entry name" value="Cyt_c_oxidase_su8"/>
</dbReference>
<dbReference type="InterPro" id="IPR036548">
    <property type="entry name" value="Cyt_c_oxidase_su8_sf"/>
</dbReference>
<dbReference type="PANTHER" id="PTHR16717">
    <property type="entry name" value="CYTOCHROME C OXIDASE POLYPEPTIDE VIII"/>
    <property type="match status" value="1"/>
</dbReference>
<dbReference type="PANTHER" id="PTHR16717:SF4">
    <property type="entry name" value="CYTOCHROME C OXIDASE SUBUNIT 8B, MITOCHONDRIAL"/>
    <property type="match status" value="1"/>
</dbReference>
<dbReference type="Pfam" id="PF02285">
    <property type="entry name" value="COX8"/>
    <property type="match status" value="1"/>
</dbReference>
<dbReference type="SUPFAM" id="SSF81431">
    <property type="entry name" value="Mitochondrial cytochrome c oxidase subunit VIIIb (aka IX)"/>
    <property type="match status" value="1"/>
</dbReference>
<proteinExistence type="evidence at protein level"/>
<accession>P48772</accession>
<organism>
    <name type="scientific">Mus musculus</name>
    <name type="common">Mouse</name>
    <dbReference type="NCBI Taxonomy" id="10090"/>
    <lineage>
        <taxon>Eukaryota</taxon>
        <taxon>Metazoa</taxon>
        <taxon>Chordata</taxon>
        <taxon>Craniata</taxon>
        <taxon>Vertebrata</taxon>
        <taxon>Euteleostomi</taxon>
        <taxon>Mammalia</taxon>
        <taxon>Eutheria</taxon>
        <taxon>Euarchontoglires</taxon>
        <taxon>Glires</taxon>
        <taxon>Rodentia</taxon>
        <taxon>Myomorpha</taxon>
        <taxon>Muroidea</taxon>
        <taxon>Muridae</taxon>
        <taxon>Murinae</taxon>
        <taxon>Mus</taxon>
        <taxon>Mus</taxon>
    </lineage>
</organism>
<feature type="transit peptide" description="Mitochondrion" evidence="1">
    <location>
        <begin position="1"/>
        <end position="24"/>
    </location>
</feature>
<feature type="chain" id="PRO_0000006178" description="Cytochrome c oxidase subunit 8B, mitochondrial">
    <location>
        <begin position="25"/>
        <end position="70"/>
    </location>
</feature>
<feature type="topological domain" description="Mitochondrial matrix" evidence="2 6 7">
    <location>
        <begin position="25"/>
        <end position="38"/>
    </location>
</feature>
<feature type="transmembrane region" description="Helical" evidence="2 6 7">
    <location>
        <begin position="39"/>
        <end position="60"/>
    </location>
</feature>
<feature type="topological domain" description="Mitochondrial intermembrane" evidence="2 6 7">
    <location>
        <begin position="61"/>
        <end position="70"/>
    </location>
</feature>
<feature type="helix" evidence="9">
    <location>
        <begin position="36"/>
        <end position="51"/>
    </location>
</feature>
<feature type="helix" evidence="9">
    <location>
        <begin position="53"/>
        <end position="57"/>
    </location>
</feature>
<feature type="strand" evidence="9">
    <location>
        <begin position="61"/>
        <end position="63"/>
    </location>
</feature>
<feature type="turn" evidence="9">
    <location>
        <begin position="64"/>
        <end position="66"/>
    </location>
</feature>
<comment type="function">
    <text evidence="2 3">Component of the cytochrome c oxidase, the last enzyme in the mitochondrial electron transport chain which drives oxidative phosphorylation. The respiratory chain contains 3 multisubunit complexes succinate dehydrogenase (complex II, CII), ubiquinol-cytochrome c oxidoreductase (cytochrome b-c1 complex, complex III, CIII) and cytochrome c oxidase (complex IV, CIV), that cooperate to transfer electrons derived from NADH and succinate to molecular oxygen, creating an electrochemical gradient over the inner membrane that drives transmembrane transport and the ATP synthase. Cytochrome c oxidase is the component of the respiratory chain that catalyzes the reduction of oxygen to water. Electrons originating from reduced cytochrome c in the intermembrane space (IMS) are transferred via the dinuclear copper A center (CU(A)) of subunit 2 and heme A of subunit 1 to the active site in subunit 1, a binuclear center (BNC) formed by heme A3 and copper B (CU(B)). The BNC reduces molecular oxygen to 2 water molecules using 4 electrons from cytochrome c in the IMS and 4 protons from the mitochondrial matrix.</text>
</comment>
<comment type="pathway">
    <text evidence="2 3">Energy metabolism; oxidative phosphorylation.</text>
</comment>
<comment type="subunit">
    <text evidence="2 3">Component of the cytochrome c oxidase (complex IV, CIV), a multisubunit enzyme composed of 14 subunits (PubMed:34616041, PubMed:38575788). The complex is composed of a catalytic core of 3 subunits MT-CO1, MT-CO2 and MT-CO3, encoded in the mitochondrial DNA, and 11 supernumerary subunits COX4I, COX5A, COX5B, COX6A, COX6B, COX6C, COX7A, COX7B, COX7C, COX8 and NDUFA4, which are encoded in the nuclear genome (PubMed:34616041, PubMed:38575788). The complex exists as a monomer or a dimer and forms supercomplexes (SCs) in the inner mitochondrial membrane with NADH-ubiquinone oxidoreductase (complex I, CI) and ubiquinol-cytochrome c oxidoreductase (cytochrome b-c1 complex, complex III, CIII), resulting in different assemblies (supercomplex SCI(1)III(2)IV(1) and megacomplex MCI(2)III(2)IV(2)) (PubMed:34616041, PubMed:38575788).</text>
</comment>
<comment type="subcellular location">
    <subcellularLocation>
        <location evidence="2 3">Mitochondrion inner membrane</location>
        <topology evidence="2 3">Single-pass membrane protein</topology>
    </subcellularLocation>
</comment>
<comment type="similarity">
    <text evidence="4">Belongs to the cytochrome c oxidase VIII family.</text>
</comment>
<name>COX8B_MOUSE</name>
<keyword id="KW-0002">3D-structure</keyword>
<keyword id="KW-0472">Membrane</keyword>
<keyword id="KW-0496">Mitochondrion</keyword>
<keyword id="KW-0999">Mitochondrion inner membrane</keyword>
<keyword id="KW-1185">Reference proteome</keyword>
<keyword id="KW-0809">Transit peptide</keyword>
<keyword id="KW-0812">Transmembrane</keyword>
<keyword id="KW-1133">Transmembrane helix</keyword>
<gene>
    <name type="primary">Cox8b</name>
    <name type="synonym">Cox8h</name>
</gene>